<geneLocation type="chloroplast"/>
<feature type="chain" id="PRO_0000088566" description="Photosystem I P700 chlorophyll a apoprotein A1">
    <location>
        <begin position="1"/>
        <end position="750"/>
    </location>
</feature>
<feature type="transmembrane region" description="Helical; Name=I" evidence="1">
    <location>
        <begin position="70"/>
        <end position="93"/>
    </location>
</feature>
<feature type="transmembrane region" description="Helical; Name=II" evidence="1">
    <location>
        <begin position="156"/>
        <end position="179"/>
    </location>
</feature>
<feature type="transmembrane region" description="Helical; Name=III" evidence="1">
    <location>
        <begin position="195"/>
        <end position="219"/>
    </location>
</feature>
<feature type="transmembrane region" description="Helical; Name=IV" evidence="1">
    <location>
        <begin position="291"/>
        <end position="309"/>
    </location>
</feature>
<feature type="transmembrane region" description="Helical; Name=V" evidence="1">
    <location>
        <begin position="346"/>
        <end position="369"/>
    </location>
</feature>
<feature type="transmembrane region" description="Helical; Name=VI" evidence="1">
    <location>
        <begin position="385"/>
        <end position="411"/>
    </location>
</feature>
<feature type="transmembrane region" description="Helical; Name=VII" evidence="1">
    <location>
        <begin position="433"/>
        <end position="455"/>
    </location>
</feature>
<feature type="transmembrane region" description="Helical; Name=VIII" evidence="1">
    <location>
        <begin position="531"/>
        <end position="549"/>
    </location>
</feature>
<feature type="transmembrane region" description="Helical; Name=IX" evidence="1">
    <location>
        <begin position="589"/>
        <end position="610"/>
    </location>
</feature>
<feature type="transmembrane region" description="Helical; Name=X" evidence="1">
    <location>
        <begin position="664"/>
        <end position="686"/>
    </location>
</feature>
<feature type="transmembrane region" description="Helical; Name=XI" evidence="1">
    <location>
        <begin position="724"/>
        <end position="744"/>
    </location>
</feature>
<feature type="binding site" evidence="1">
    <location>
        <position position="573"/>
    </location>
    <ligand>
        <name>[4Fe-4S] cluster</name>
        <dbReference type="ChEBI" id="CHEBI:49883"/>
        <note>ligand shared between dimeric partners</note>
    </ligand>
</feature>
<feature type="binding site" evidence="1">
    <location>
        <position position="582"/>
    </location>
    <ligand>
        <name>[4Fe-4S] cluster</name>
        <dbReference type="ChEBI" id="CHEBI:49883"/>
        <note>ligand shared between dimeric partners</note>
    </ligand>
</feature>
<feature type="binding site" description="axial binding residue" evidence="1">
    <location>
        <position position="675"/>
    </location>
    <ligand>
        <name>chlorophyll a'</name>
        <dbReference type="ChEBI" id="CHEBI:189419"/>
        <label>A1</label>
    </ligand>
    <ligandPart>
        <name>Mg</name>
        <dbReference type="ChEBI" id="CHEBI:25107"/>
    </ligandPart>
</feature>
<feature type="binding site" description="axial binding residue" evidence="1">
    <location>
        <position position="683"/>
    </location>
    <ligand>
        <name>chlorophyll a</name>
        <dbReference type="ChEBI" id="CHEBI:58416"/>
        <label>A3</label>
    </ligand>
    <ligandPart>
        <name>Mg</name>
        <dbReference type="ChEBI" id="CHEBI:25107"/>
    </ligandPart>
</feature>
<feature type="binding site" evidence="1">
    <location>
        <position position="691"/>
    </location>
    <ligand>
        <name>chlorophyll a</name>
        <dbReference type="ChEBI" id="CHEBI:58416"/>
        <label>A3</label>
    </ligand>
</feature>
<feature type="binding site" evidence="1">
    <location>
        <position position="692"/>
    </location>
    <ligand>
        <name>phylloquinone</name>
        <dbReference type="ChEBI" id="CHEBI:18067"/>
        <label>A</label>
    </ligand>
</feature>
<protein>
    <recommendedName>
        <fullName evidence="1">Photosystem I P700 chlorophyll a apoprotein A1</fullName>
        <ecNumber evidence="1">1.97.1.12</ecNumber>
    </recommendedName>
    <alternativeName>
        <fullName evidence="1">PSI-A</fullName>
    </alternativeName>
    <alternativeName>
        <fullName evidence="1">PsaA</fullName>
    </alternativeName>
</protein>
<dbReference type="EC" id="1.97.1.12" evidence="1"/>
<dbReference type="EMBL" id="AY522331">
    <property type="protein sequence ID" value="AAS46184.1"/>
    <property type="status" value="ALT_INIT"/>
    <property type="molecule type" value="Genomic_DNA"/>
</dbReference>
<dbReference type="RefSeq" id="YP_009305304.1">
    <property type="nucleotide sequence ID" value="NC_031333.1"/>
</dbReference>
<dbReference type="SMR" id="P0C353"/>
<dbReference type="GeneID" id="29141363"/>
<dbReference type="GO" id="GO:0009535">
    <property type="term" value="C:chloroplast thylakoid membrane"/>
    <property type="evidence" value="ECO:0007669"/>
    <property type="project" value="UniProtKB-SubCell"/>
</dbReference>
<dbReference type="GO" id="GO:0009522">
    <property type="term" value="C:photosystem I"/>
    <property type="evidence" value="ECO:0007669"/>
    <property type="project" value="UniProtKB-KW"/>
</dbReference>
<dbReference type="GO" id="GO:0009536">
    <property type="term" value="C:plastid"/>
    <property type="evidence" value="ECO:0000305"/>
    <property type="project" value="Gramene"/>
</dbReference>
<dbReference type="GO" id="GO:0051539">
    <property type="term" value="F:4 iron, 4 sulfur cluster binding"/>
    <property type="evidence" value="ECO:0007669"/>
    <property type="project" value="UniProtKB-KW"/>
</dbReference>
<dbReference type="GO" id="GO:0016168">
    <property type="term" value="F:chlorophyll binding"/>
    <property type="evidence" value="ECO:0007669"/>
    <property type="project" value="UniProtKB-KW"/>
</dbReference>
<dbReference type="GO" id="GO:0009055">
    <property type="term" value="F:electron transfer activity"/>
    <property type="evidence" value="ECO:0007669"/>
    <property type="project" value="UniProtKB-UniRule"/>
</dbReference>
<dbReference type="GO" id="GO:0000287">
    <property type="term" value="F:magnesium ion binding"/>
    <property type="evidence" value="ECO:0007669"/>
    <property type="project" value="UniProtKB-UniRule"/>
</dbReference>
<dbReference type="GO" id="GO:0016491">
    <property type="term" value="F:oxidoreductase activity"/>
    <property type="evidence" value="ECO:0007669"/>
    <property type="project" value="UniProtKB-KW"/>
</dbReference>
<dbReference type="GO" id="GO:0015979">
    <property type="term" value="P:photosynthesis"/>
    <property type="evidence" value="ECO:0007669"/>
    <property type="project" value="UniProtKB-UniRule"/>
</dbReference>
<dbReference type="FunFam" id="1.20.1130.10:FF:000001">
    <property type="entry name" value="Photosystem I P700 chlorophyll a apoprotein A2"/>
    <property type="match status" value="1"/>
</dbReference>
<dbReference type="Gene3D" id="1.20.1130.10">
    <property type="entry name" value="Photosystem I PsaA/PsaB"/>
    <property type="match status" value="1"/>
</dbReference>
<dbReference type="HAMAP" id="MF_00458">
    <property type="entry name" value="PSI_PsaA"/>
    <property type="match status" value="1"/>
</dbReference>
<dbReference type="InterPro" id="IPR006243">
    <property type="entry name" value="PSI_PsaA"/>
</dbReference>
<dbReference type="InterPro" id="IPR001280">
    <property type="entry name" value="PSI_PsaA/B"/>
</dbReference>
<dbReference type="InterPro" id="IPR020586">
    <property type="entry name" value="PSI_PsaA/B_CS"/>
</dbReference>
<dbReference type="InterPro" id="IPR036408">
    <property type="entry name" value="PSI_PsaA/B_sf"/>
</dbReference>
<dbReference type="NCBIfam" id="TIGR01335">
    <property type="entry name" value="psaA"/>
    <property type="match status" value="1"/>
</dbReference>
<dbReference type="PANTHER" id="PTHR30128">
    <property type="entry name" value="OUTER MEMBRANE PROTEIN, OMPA-RELATED"/>
    <property type="match status" value="1"/>
</dbReference>
<dbReference type="PANTHER" id="PTHR30128:SF19">
    <property type="entry name" value="PHOTOSYSTEM I P700 CHLOROPHYLL A APOPROTEIN A1-RELATED"/>
    <property type="match status" value="1"/>
</dbReference>
<dbReference type="Pfam" id="PF00223">
    <property type="entry name" value="PsaA_PsaB"/>
    <property type="match status" value="1"/>
</dbReference>
<dbReference type="PIRSF" id="PIRSF002905">
    <property type="entry name" value="PSI_A"/>
    <property type="match status" value="1"/>
</dbReference>
<dbReference type="PRINTS" id="PR00257">
    <property type="entry name" value="PHOTSYSPSAAB"/>
</dbReference>
<dbReference type="SUPFAM" id="SSF81558">
    <property type="entry name" value="Photosystem I subunits PsaA/PsaB"/>
    <property type="match status" value="1"/>
</dbReference>
<dbReference type="PROSITE" id="PS00419">
    <property type="entry name" value="PHOTOSYSTEM_I_PSAAB"/>
    <property type="match status" value="1"/>
</dbReference>
<sequence length="750" mass="83169">MMIRSPEPEVKIVVDRDPVKTSFEEWARPGHFSRTIAKGPDTTTWIWNLHADAHDFDSHTGDLEEISRKVFSAHFGQLSIIFLWLSGMYFHGARFSNYEAWLSDPTHIGPSAQVVWPIVGQEILNGDVGGGFRGIQITSGFFQIWRASGITSELQLYCTAIGALIFASLMLFAGWFHYHKAAPKLAWFQDVESMLNHHLAGLLGLGSLSWAGHQIHVSLPINQFLDAGVDPKEIPLPHEFILNRDLLAQLYPSFAEGATPFFTLNWSKYAEFLSFRGGLDPITGGLWLSDIAHHHLAIAILFLIAGHMYRTNWGIGHGLKDILEAHKGPFTGQGHKGLYEILTTSWHAQLSLNLAMLGSTTIVVAHHMYSMPPYPYLATDYGTQLSLFTHHMWIGGFLIVGAAAHAAIFMVRDYDPTTRYNDLLDRVLRHRDAIISHLNWVCIFLGFHSFGLYIHNDTMSALGRPQDMFSDTAIQLQPIFAQWVQNLHAGAPSVTAPGATTSTSLTWGGGELVAVGGKVALLPIPLGTADFLVHHIHAFTIHVTVLILLKGVLFARSSRLIPDKANLGFRFPCDGPGRGGTCQVSAWDHVFLGLFWMYNSISVVIFHFSWKMQSDVWGTISDQGVVTHITGGNFAQSSITINGWLRDFLWAQASQVIQSYGSSLSAYGLFFLGAHFVWAFSLMFLFSGRGYWQELIESIVWAHNKLKVAPATQPRALSIIQGRAVGVTHYLLGGIATTWAFFLARIIAVG</sequence>
<organism>
    <name type="scientific">Oryza sativa</name>
    <name type="common">Rice</name>
    <dbReference type="NCBI Taxonomy" id="4530"/>
    <lineage>
        <taxon>Eukaryota</taxon>
        <taxon>Viridiplantae</taxon>
        <taxon>Streptophyta</taxon>
        <taxon>Embryophyta</taxon>
        <taxon>Tracheophyta</taxon>
        <taxon>Spermatophyta</taxon>
        <taxon>Magnoliopsida</taxon>
        <taxon>Liliopsida</taxon>
        <taxon>Poales</taxon>
        <taxon>Poaceae</taxon>
        <taxon>BOP clade</taxon>
        <taxon>Oryzoideae</taxon>
        <taxon>Oryzeae</taxon>
        <taxon>Oryzinae</taxon>
        <taxon>Oryza</taxon>
    </lineage>
</organism>
<gene>
    <name evidence="1" type="primary">psaA</name>
    <name type="ORF">PA050</name>
</gene>
<proteinExistence type="inferred from homology"/>
<comment type="function">
    <text>PsaA and PsaB bind P700, the primary electron donor of photosystem I (PSI), as well as the electron acceptors A0, A1 and FX. PSI is a plastocyanin-ferredoxin oxidoreductase, converting photonic excitation into a charge separation, which transfers an electron from the donor P700 chlorophyll pair to the spectroscopically characterized acceptors A0, A1, FX, FA and FB in turn. Oxidized P700 is reduced on the lumenal side of the thylakoid membrane by plastocyanin.</text>
</comment>
<comment type="catalytic activity">
    <reaction evidence="1">
        <text>reduced [plastocyanin] + hnu + oxidized [2Fe-2S]-[ferredoxin] = oxidized [plastocyanin] + reduced [2Fe-2S]-[ferredoxin]</text>
        <dbReference type="Rhea" id="RHEA:30407"/>
        <dbReference type="Rhea" id="RHEA-COMP:10000"/>
        <dbReference type="Rhea" id="RHEA-COMP:10001"/>
        <dbReference type="Rhea" id="RHEA-COMP:10039"/>
        <dbReference type="Rhea" id="RHEA-COMP:10040"/>
        <dbReference type="ChEBI" id="CHEBI:29036"/>
        <dbReference type="ChEBI" id="CHEBI:30212"/>
        <dbReference type="ChEBI" id="CHEBI:33737"/>
        <dbReference type="ChEBI" id="CHEBI:33738"/>
        <dbReference type="ChEBI" id="CHEBI:49552"/>
        <dbReference type="EC" id="1.97.1.12"/>
    </reaction>
</comment>
<comment type="cofactor">
    <text evidence="1">P700 is a chlorophyll a/chlorophyll a' dimer, A0 is one or more chlorophyll a, A1 is one or both phylloquinones and FX is a shared 4Fe-4S iron-sulfur center.</text>
</comment>
<comment type="subunit">
    <text evidence="1">The PsaA/B heterodimer binds the P700 chlorophyll special pair and subsequent electron acceptors. PSI consists of a core antenna complex that captures photons, and an electron transfer chain that converts photonic excitation into a charge separation. The eukaryotic PSI reaction center is composed of at least 11 subunits.</text>
</comment>
<comment type="subcellular location">
    <subcellularLocation>
        <location evidence="1">Plastid</location>
        <location evidence="1">Chloroplast thylakoid membrane</location>
        <topology evidence="1">Multi-pass membrane protein</topology>
    </subcellularLocation>
</comment>
<comment type="similarity">
    <text evidence="1">Belongs to the PsaA/PsaB family.</text>
</comment>
<comment type="sequence caution" evidence="2">
    <conflict type="erroneous initiation">
        <sequence resource="EMBL-CDS" id="AAS46184"/>
    </conflict>
</comment>
<accession>P0C353</accession>
<accession>P12155</accession>
<accession>Q6QY10</accession>
<accession>Q6QY74</accession>
<name>PSAA_ORYSA</name>
<reference key="1">
    <citation type="journal article" date="2004" name="Plant Physiol.">
        <title>A comparison of rice chloroplast genomes.</title>
        <authorList>
            <person name="Tang J."/>
            <person name="Xia H."/>
            <person name="Cao M."/>
            <person name="Zhang X."/>
            <person name="Zeng W."/>
            <person name="Hu S."/>
            <person name="Tong W."/>
            <person name="Wang J."/>
            <person name="Wang J."/>
            <person name="Yu J."/>
            <person name="Yang H."/>
            <person name="Zhu L."/>
        </authorList>
    </citation>
    <scope>NUCLEOTIDE SEQUENCE [LARGE SCALE GENOMIC DNA]</scope>
    <source>
        <strain>cv. PA64s</strain>
    </source>
</reference>
<evidence type="ECO:0000255" key="1">
    <source>
        <dbReference type="HAMAP-Rule" id="MF_00458"/>
    </source>
</evidence>
<evidence type="ECO:0000305" key="2"/>
<keyword id="KW-0004">4Fe-4S</keyword>
<keyword id="KW-0148">Chlorophyll</keyword>
<keyword id="KW-0150">Chloroplast</keyword>
<keyword id="KW-0157">Chromophore</keyword>
<keyword id="KW-0249">Electron transport</keyword>
<keyword id="KW-0408">Iron</keyword>
<keyword id="KW-0411">Iron-sulfur</keyword>
<keyword id="KW-0460">Magnesium</keyword>
<keyword id="KW-0472">Membrane</keyword>
<keyword id="KW-0479">Metal-binding</keyword>
<keyword id="KW-0560">Oxidoreductase</keyword>
<keyword id="KW-0602">Photosynthesis</keyword>
<keyword id="KW-0603">Photosystem I</keyword>
<keyword id="KW-0934">Plastid</keyword>
<keyword id="KW-0793">Thylakoid</keyword>
<keyword id="KW-0812">Transmembrane</keyword>
<keyword id="KW-1133">Transmembrane helix</keyword>
<keyword id="KW-0813">Transport</keyword>